<feature type="signal peptide" evidence="1">
    <location>
        <begin position="1"/>
        <end position="15"/>
    </location>
</feature>
<feature type="chain" id="PRO_1000140649" description="UPF0194 membrane protein YbhG">
    <location>
        <begin position="16"/>
        <end position="331"/>
    </location>
</feature>
<feature type="coiled-coil region" evidence="1">
    <location>
        <begin position="107"/>
        <end position="208"/>
    </location>
</feature>
<keyword id="KW-0175">Coiled coil</keyword>
<keyword id="KW-0574">Periplasm</keyword>
<keyword id="KW-0732">Signal</keyword>
<name>YBHG_ECO5E</name>
<evidence type="ECO:0000255" key="1">
    <source>
        <dbReference type="HAMAP-Rule" id="MF_01304"/>
    </source>
</evidence>
<reference key="1">
    <citation type="journal article" date="2011" name="Proc. Natl. Acad. Sci. U.S.A.">
        <title>Genomic anatomy of Escherichia coli O157:H7 outbreaks.</title>
        <authorList>
            <person name="Eppinger M."/>
            <person name="Mammel M.K."/>
            <person name="Leclerc J.E."/>
            <person name="Ravel J."/>
            <person name="Cebula T.A."/>
        </authorList>
    </citation>
    <scope>NUCLEOTIDE SEQUENCE [LARGE SCALE GENOMIC DNA]</scope>
    <source>
        <strain>EC4115 / EHEC</strain>
    </source>
</reference>
<sequence>MKKPVVIGLAVVVLAAVVAGGYWWYQSRQDNGLTLYGNVDIRTVNLSFRVGGRVESLAVDEGDAIKAGQVLGELDHKPYEIALMQAKAGVSVAQAQYDLMLAGYRDEEIAQAAAAVKQAQAAYDYAQNFYNRQQGLWKSRTISANDLENARSSRDQAQATLKSAQDKLRQYRSGNREQDIAQAKASLEQAQAQLAQAELNLQDSTLIAPSDGTLLTRAVEPGTVLNEGGTVFTVSLTRPVWVRAYVDERNLDQAQPGRKVLLYTDGRPDKPYHGQIGFVSPTAEFTPKTVETPDLRTDLVYRLRIVVTDADDALRQGMPVTVQFGDEAGHE</sequence>
<protein>
    <recommendedName>
        <fullName evidence="1">UPF0194 membrane protein YbhG</fullName>
    </recommendedName>
</protein>
<organism>
    <name type="scientific">Escherichia coli O157:H7 (strain EC4115 / EHEC)</name>
    <dbReference type="NCBI Taxonomy" id="444450"/>
    <lineage>
        <taxon>Bacteria</taxon>
        <taxon>Pseudomonadati</taxon>
        <taxon>Pseudomonadota</taxon>
        <taxon>Gammaproteobacteria</taxon>
        <taxon>Enterobacterales</taxon>
        <taxon>Enterobacteriaceae</taxon>
        <taxon>Escherichia</taxon>
    </lineage>
</organism>
<comment type="subcellular location">
    <subcellularLocation>
        <location evidence="1">Periplasm</location>
    </subcellularLocation>
</comment>
<comment type="similarity">
    <text evidence="1">Belongs to the UPF0194 family.</text>
</comment>
<dbReference type="EMBL" id="CP001164">
    <property type="protein sequence ID" value="ACI36848.1"/>
    <property type="molecule type" value="Genomic_DNA"/>
</dbReference>
<dbReference type="SMR" id="B5YS86"/>
<dbReference type="KEGG" id="ecf:ECH74115_0943"/>
<dbReference type="HOGENOM" id="CLU_018816_6_3_6"/>
<dbReference type="GO" id="GO:0042597">
    <property type="term" value="C:periplasmic space"/>
    <property type="evidence" value="ECO:0007669"/>
    <property type="project" value="UniProtKB-SubCell"/>
</dbReference>
<dbReference type="FunFam" id="1.10.287.470:FF:000004">
    <property type="entry name" value="UPF0194 membrane protein YbhG"/>
    <property type="match status" value="1"/>
</dbReference>
<dbReference type="FunFam" id="2.40.30.170:FF:000005">
    <property type="entry name" value="UPF0194 membrane protein YbhG"/>
    <property type="match status" value="1"/>
</dbReference>
<dbReference type="FunFam" id="2.40.50.100:FF:000025">
    <property type="entry name" value="UPF0194 membrane protein YbhG"/>
    <property type="match status" value="1"/>
</dbReference>
<dbReference type="Gene3D" id="2.40.30.170">
    <property type="match status" value="1"/>
</dbReference>
<dbReference type="Gene3D" id="2.40.50.100">
    <property type="match status" value="2"/>
</dbReference>
<dbReference type="Gene3D" id="1.10.287.470">
    <property type="entry name" value="Helix hairpin bin"/>
    <property type="match status" value="2"/>
</dbReference>
<dbReference type="HAMAP" id="MF_01304">
    <property type="entry name" value="UPF0194"/>
    <property type="match status" value="1"/>
</dbReference>
<dbReference type="InterPro" id="IPR032317">
    <property type="entry name" value="CusB_D23"/>
</dbReference>
<dbReference type="InterPro" id="IPR022936">
    <property type="entry name" value="UPF0194_membrane_YbhG"/>
</dbReference>
<dbReference type="InterPro" id="IPR050465">
    <property type="entry name" value="UPF0194_transport"/>
</dbReference>
<dbReference type="NCBIfam" id="NF002939">
    <property type="entry name" value="PRK03598.1"/>
    <property type="match status" value="1"/>
</dbReference>
<dbReference type="PANTHER" id="PTHR32347">
    <property type="entry name" value="EFFLUX SYSTEM COMPONENT YKNX-RELATED"/>
    <property type="match status" value="1"/>
</dbReference>
<dbReference type="PANTHER" id="PTHR32347:SF29">
    <property type="entry name" value="UPF0194 MEMBRANE PROTEIN YBHG"/>
    <property type="match status" value="1"/>
</dbReference>
<dbReference type="Pfam" id="PF16576">
    <property type="entry name" value="HlyD_D23"/>
    <property type="match status" value="1"/>
</dbReference>
<dbReference type="SUPFAM" id="SSF111369">
    <property type="entry name" value="HlyD-like secretion proteins"/>
    <property type="match status" value="3"/>
</dbReference>
<accession>B5YS86</accession>
<proteinExistence type="inferred from homology"/>
<gene>
    <name evidence="1" type="primary">ybhG</name>
    <name type="ordered locus">ECH74115_0943</name>
</gene>